<accession>P36930</accession>
<accession>P76408</accession>
<accession>P76409</accession>
<evidence type="ECO:0000255" key="1">
    <source>
        <dbReference type="PROSITE-ProRule" id="PRU00349"/>
    </source>
</evidence>
<evidence type="ECO:0000305" key="2"/>
<evidence type="ECO:0000305" key="3">
    <source>
    </source>
</evidence>
<dbReference type="EMBL" id="U00096">
    <property type="status" value="NOT_ANNOTATED_CDS"/>
    <property type="molecule type" value="Genomic_DNA"/>
</dbReference>
<dbReference type="EMBL" id="AP009048">
    <property type="status" value="NOT_ANNOTATED_CDS"/>
    <property type="molecule type" value="Genomic_DNA"/>
</dbReference>
<dbReference type="EMBL" id="X79837">
    <property type="protein sequence ID" value="CAA56232.1"/>
    <property type="molecule type" value="Genomic_DNA"/>
</dbReference>
<dbReference type="EMBL" id="D12598">
    <property type="status" value="NOT_ANNOTATED_CDS"/>
    <property type="molecule type" value="Genomic_DNA"/>
</dbReference>
<dbReference type="FunCoup" id="P36930">
    <property type="interactions" value="14"/>
</dbReference>
<dbReference type="IntAct" id="P36930">
    <property type="interactions" value="8"/>
</dbReference>
<dbReference type="EchoBASE" id="EB2081"/>
<dbReference type="InParanoid" id="P36930"/>
<dbReference type="PhylomeDB" id="P36930"/>
<dbReference type="PRO" id="PR:P36930"/>
<dbReference type="Proteomes" id="UP000000625">
    <property type="component" value="Chromosome"/>
</dbReference>
<dbReference type="GO" id="GO:0003677">
    <property type="term" value="F:DNA binding"/>
    <property type="evidence" value="ECO:0007669"/>
    <property type="project" value="UniProtKB-KW"/>
</dbReference>
<dbReference type="GO" id="GO:0003700">
    <property type="term" value="F:DNA-binding transcription factor activity"/>
    <property type="evidence" value="ECO:0007669"/>
    <property type="project" value="InterPro"/>
</dbReference>
<dbReference type="Gene3D" id="1.10.10.10">
    <property type="entry name" value="Winged helix-like DNA-binding domain superfamily/Winged helix DNA-binding domain"/>
    <property type="match status" value="1"/>
</dbReference>
<dbReference type="InterPro" id="IPR050313">
    <property type="entry name" value="Carb_Metab_HTH_regulators"/>
</dbReference>
<dbReference type="InterPro" id="IPR001034">
    <property type="entry name" value="DeoR_HTH"/>
</dbReference>
<dbReference type="InterPro" id="IPR018356">
    <property type="entry name" value="Tscrpt_reg_HTH_DeoR_CS"/>
</dbReference>
<dbReference type="InterPro" id="IPR036388">
    <property type="entry name" value="WH-like_DNA-bd_sf"/>
</dbReference>
<dbReference type="InterPro" id="IPR036390">
    <property type="entry name" value="WH_DNA-bd_sf"/>
</dbReference>
<dbReference type="PANTHER" id="PTHR30363:SF44">
    <property type="entry name" value="AGA OPERON TRANSCRIPTIONAL REPRESSOR-RELATED"/>
    <property type="match status" value="1"/>
</dbReference>
<dbReference type="PANTHER" id="PTHR30363">
    <property type="entry name" value="HTH-TYPE TRANSCRIPTIONAL REGULATOR SRLR-RELATED"/>
    <property type="match status" value="1"/>
</dbReference>
<dbReference type="Pfam" id="PF08220">
    <property type="entry name" value="HTH_DeoR"/>
    <property type="match status" value="1"/>
</dbReference>
<dbReference type="PRINTS" id="PR00037">
    <property type="entry name" value="HTHLACR"/>
</dbReference>
<dbReference type="SMART" id="SM00420">
    <property type="entry name" value="HTH_DEOR"/>
    <property type="match status" value="1"/>
</dbReference>
<dbReference type="SUPFAM" id="SSF46785">
    <property type="entry name" value="Winged helix' DNA-binding domain"/>
    <property type="match status" value="1"/>
</dbReference>
<dbReference type="PROSITE" id="PS00894">
    <property type="entry name" value="HTH_DEOR_1"/>
    <property type="match status" value="1"/>
</dbReference>
<dbReference type="PROSITE" id="PS51000">
    <property type="entry name" value="HTH_DEOR_2"/>
    <property type="match status" value="1"/>
</dbReference>
<feature type="chain" id="PRO_0000050250" description="Putative galactitol utilization operon repressor">
    <location>
        <begin position="1"/>
        <end position="112"/>
    </location>
</feature>
<feature type="domain" description="HTH deoR-type" evidence="1">
    <location>
        <begin position="5"/>
        <end position="60"/>
    </location>
</feature>
<feature type="DNA-binding region" description="H-T-H motif" evidence="1">
    <location>
        <begin position="22"/>
        <end position="41"/>
    </location>
</feature>
<feature type="sequence conflict" description="In Ref. 4; CAA56232." evidence="2" ref="4">
    <original>DPTHVIWTQA</original>
    <variation>TVILDSGSTTMLIAED</variation>
    <location>
        <begin position="103"/>
        <end position="112"/>
    </location>
</feature>
<protein>
    <recommendedName>
        <fullName>Putative galactitol utilization operon repressor</fullName>
    </recommendedName>
</protein>
<proteinExistence type="uncertain"/>
<sequence>MTMNSFERRNKIIQLVNEQGTVLVQDLAGVFAASEATIRADLRFLEQKGVVTRFHGGAAKIMSGNSETETQEVGFKERFQLASAPKNRIAQAAVKMIHEGMTDPTHVIWTQA</sequence>
<gene>
    <name type="primary">gatR</name>
    <name type="ordered locus">b4498</name>
    <name type="ordered locus">JW5340/JW2074</name>
    <name type="ORF">b2087/b2090</name>
</gene>
<keyword id="KW-0238">DNA-binding</keyword>
<keyword id="KW-1185">Reference proteome</keyword>
<keyword id="KW-0678">Repressor</keyword>
<keyword id="KW-0804">Transcription</keyword>
<keyword id="KW-0805">Transcription regulation</keyword>
<comment type="function">
    <text evidence="3">Repressor of the gat operon for galacticol transport and metabolism. In K12 strains the operon is constitutively expressed because this gene is inactive (PubMed:7772602).</text>
</comment>
<comment type="caution">
    <text evidence="2">Could be the product of a pseudogene, in E.coli K12, an insertion sequence (IS3E) is inserted in the gatR gene in position 102.</text>
</comment>
<reference key="1">
    <citation type="journal article" date="1996" name="DNA Res.">
        <title>A 460-kb DNA sequence of the Escherichia coli K-12 genome corresponding to the 40.1-50.0 min region on the linkage map.</title>
        <authorList>
            <person name="Itoh T."/>
            <person name="Aiba H."/>
            <person name="Baba T."/>
            <person name="Fujita K."/>
            <person name="Hayashi K."/>
            <person name="Inada T."/>
            <person name="Isono K."/>
            <person name="Kasai H."/>
            <person name="Kimura S."/>
            <person name="Kitakawa M."/>
            <person name="Kitagawa M."/>
            <person name="Makino K."/>
            <person name="Miki T."/>
            <person name="Mizobuchi K."/>
            <person name="Mori H."/>
            <person name="Mori T."/>
            <person name="Motomura K."/>
            <person name="Nakade S."/>
            <person name="Nakamura Y."/>
            <person name="Nashimoto H."/>
            <person name="Nishio Y."/>
            <person name="Oshima T."/>
            <person name="Saito N."/>
            <person name="Sampei G."/>
            <person name="Seki Y."/>
            <person name="Sivasundaram S."/>
            <person name="Tagami H."/>
            <person name="Takeda J."/>
            <person name="Takemoto K."/>
            <person name="Wada C."/>
            <person name="Yamamoto Y."/>
            <person name="Horiuchi T."/>
        </authorList>
    </citation>
    <scope>NUCLEOTIDE SEQUENCE [LARGE SCALE GENOMIC DNA]</scope>
    <source>
        <strain>K12 / W3110 / ATCC 27325 / DSM 5911</strain>
    </source>
</reference>
<reference key="2">
    <citation type="journal article" date="1997" name="Science">
        <title>The complete genome sequence of Escherichia coli K-12.</title>
        <authorList>
            <person name="Blattner F.R."/>
            <person name="Plunkett G. III"/>
            <person name="Bloch C.A."/>
            <person name="Perna N.T."/>
            <person name="Burland V."/>
            <person name="Riley M."/>
            <person name="Collado-Vides J."/>
            <person name="Glasner J.D."/>
            <person name="Rode C.K."/>
            <person name="Mayhew G.F."/>
            <person name="Gregor J."/>
            <person name="Davis N.W."/>
            <person name="Kirkpatrick H.A."/>
            <person name="Goeden M.A."/>
            <person name="Rose D.J."/>
            <person name="Mau B."/>
            <person name="Shao Y."/>
        </authorList>
    </citation>
    <scope>NUCLEOTIDE SEQUENCE [LARGE SCALE GENOMIC DNA]</scope>
    <source>
        <strain>K12 / MG1655 / ATCC 47076</strain>
    </source>
</reference>
<reference key="3">
    <citation type="journal article" date="2006" name="Mol. Syst. Biol.">
        <title>Highly accurate genome sequences of Escherichia coli K-12 strains MG1655 and W3110.</title>
        <authorList>
            <person name="Hayashi K."/>
            <person name="Morooka N."/>
            <person name="Yamamoto Y."/>
            <person name="Fujita K."/>
            <person name="Isono K."/>
            <person name="Choi S."/>
            <person name="Ohtsubo E."/>
            <person name="Baba T."/>
            <person name="Wanner B.L."/>
            <person name="Mori H."/>
            <person name="Horiuchi T."/>
        </authorList>
    </citation>
    <scope>NUCLEOTIDE SEQUENCE [LARGE SCALE GENOMIC DNA]</scope>
    <source>
        <strain>K12 / W3110 / ATCC 27325 / DSM 5911</strain>
    </source>
</reference>
<reference key="4">
    <citation type="journal article" date="1995" name="Biochim. Biophys. Acta">
        <title>Sequence of the gat operon for galactitol utilization from a wild-type strain EC3132 of Escherichia coli.</title>
        <authorList>
            <person name="Nobelmann B."/>
            <person name="Lengeler J.W."/>
        </authorList>
    </citation>
    <scope>NUCLEOTIDE SEQUENCE [GENOMIC DNA]</scope>
    <scope>IDENTIFICATION</scope>
    <source>
        <strain>EC3132</strain>
    </source>
</reference>
<reference key="5">
    <citation type="submission" date="1992-07" db="EMBL/GenBank/DDBJ databases">
        <title>Nucleotide sequences flanking each of the five IS3 elements in Escherichia coli.</title>
        <authorList>
            <person name="Umeda M."/>
            <person name="Ohtsubo E."/>
        </authorList>
    </citation>
    <scope>NUCLEOTIDE SEQUENCE [GENOMIC DNA] OF 5-112</scope>
    <source>
        <strain>K12 / W3110</strain>
    </source>
</reference>
<name>GATR_ECOLI</name>
<organism>
    <name type="scientific">Escherichia coli (strain K12)</name>
    <dbReference type="NCBI Taxonomy" id="83333"/>
    <lineage>
        <taxon>Bacteria</taxon>
        <taxon>Pseudomonadati</taxon>
        <taxon>Pseudomonadota</taxon>
        <taxon>Gammaproteobacteria</taxon>
        <taxon>Enterobacterales</taxon>
        <taxon>Enterobacteriaceae</taxon>
        <taxon>Escherichia</taxon>
    </lineage>
</organism>